<accession>Q8ZBC3</accession>
<accession>Q0WBF4</accession>
<proteinExistence type="inferred from homology"/>
<keyword id="KW-0963">Cytoplasm</keyword>
<keyword id="KW-1185">Reference proteome</keyword>
<keyword id="KW-0690">Ribosome biogenesis</keyword>
<protein>
    <recommendedName>
        <fullName evidence="1">Ribosome-binding factor A</fullName>
    </recommendedName>
</protein>
<reference key="1">
    <citation type="journal article" date="2001" name="Nature">
        <title>Genome sequence of Yersinia pestis, the causative agent of plague.</title>
        <authorList>
            <person name="Parkhill J."/>
            <person name="Wren B.W."/>
            <person name="Thomson N.R."/>
            <person name="Titball R.W."/>
            <person name="Holden M.T.G."/>
            <person name="Prentice M.B."/>
            <person name="Sebaihia M."/>
            <person name="James K.D."/>
            <person name="Churcher C.M."/>
            <person name="Mungall K.L."/>
            <person name="Baker S."/>
            <person name="Basham D."/>
            <person name="Bentley S.D."/>
            <person name="Brooks K."/>
            <person name="Cerdeno-Tarraga A.-M."/>
            <person name="Chillingworth T."/>
            <person name="Cronin A."/>
            <person name="Davies R.M."/>
            <person name="Davis P."/>
            <person name="Dougan G."/>
            <person name="Feltwell T."/>
            <person name="Hamlin N."/>
            <person name="Holroyd S."/>
            <person name="Jagels K."/>
            <person name="Karlyshev A.V."/>
            <person name="Leather S."/>
            <person name="Moule S."/>
            <person name="Oyston P.C.F."/>
            <person name="Quail M.A."/>
            <person name="Rutherford K.M."/>
            <person name="Simmonds M."/>
            <person name="Skelton J."/>
            <person name="Stevens K."/>
            <person name="Whitehead S."/>
            <person name="Barrell B.G."/>
        </authorList>
    </citation>
    <scope>NUCLEOTIDE SEQUENCE [LARGE SCALE GENOMIC DNA]</scope>
    <source>
        <strain>CO-92 / Biovar Orientalis</strain>
    </source>
</reference>
<reference key="2">
    <citation type="journal article" date="2002" name="J. Bacteriol.">
        <title>Genome sequence of Yersinia pestis KIM.</title>
        <authorList>
            <person name="Deng W."/>
            <person name="Burland V."/>
            <person name="Plunkett G. III"/>
            <person name="Boutin A."/>
            <person name="Mayhew G.F."/>
            <person name="Liss P."/>
            <person name="Perna N.T."/>
            <person name="Rose D.J."/>
            <person name="Mau B."/>
            <person name="Zhou S."/>
            <person name="Schwartz D.C."/>
            <person name="Fetherston J.D."/>
            <person name="Lindler L.E."/>
            <person name="Brubaker R.R."/>
            <person name="Plano G.V."/>
            <person name="Straley S.C."/>
            <person name="McDonough K.A."/>
            <person name="Nilles M.L."/>
            <person name="Matson J.S."/>
            <person name="Blattner F.R."/>
            <person name="Perry R.D."/>
        </authorList>
    </citation>
    <scope>NUCLEOTIDE SEQUENCE [LARGE SCALE GENOMIC DNA]</scope>
    <source>
        <strain>KIM10+ / Biovar Mediaevalis</strain>
    </source>
</reference>
<reference key="3">
    <citation type="journal article" date="2004" name="DNA Res.">
        <title>Complete genome sequence of Yersinia pestis strain 91001, an isolate avirulent to humans.</title>
        <authorList>
            <person name="Song Y."/>
            <person name="Tong Z."/>
            <person name="Wang J."/>
            <person name="Wang L."/>
            <person name="Guo Z."/>
            <person name="Han Y."/>
            <person name="Zhang J."/>
            <person name="Pei D."/>
            <person name="Zhou D."/>
            <person name="Qin H."/>
            <person name="Pang X."/>
            <person name="Han Y."/>
            <person name="Zhai J."/>
            <person name="Li M."/>
            <person name="Cui B."/>
            <person name="Qi Z."/>
            <person name="Jin L."/>
            <person name="Dai R."/>
            <person name="Chen F."/>
            <person name="Li S."/>
            <person name="Ye C."/>
            <person name="Du Z."/>
            <person name="Lin W."/>
            <person name="Wang J."/>
            <person name="Yu J."/>
            <person name="Yang H."/>
            <person name="Wang J."/>
            <person name="Huang P."/>
            <person name="Yang R."/>
        </authorList>
    </citation>
    <scope>NUCLEOTIDE SEQUENCE [LARGE SCALE GENOMIC DNA]</scope>
    <source>
        <strain>91001 / Biovar Mediaevalis</strain>
    </source>
</reference>
<comment type="function">
    <text evidence="1">One of several proteins that assist in the late maturation steps of the functional core of the 30S ribosomal subunit. Associates with free 30S ribosomal subunits (but not with 30S subunits that are part of 70S ribosomes or polysomes). Required for efficient processing of 16S rRNA. May interact with the 5'-terminal helix region of 16S rRNA.</text>
</comment>
<comment type="subunit">
    <text evidence="1">Monomer. Binds 30S ribosomal subunits, but not 50S ribosomal subunits or 70S ribosomes.</text>
</comment>
<comment type="subcellular location">
    <subcellularLocation>
        <location evidence="1">Cytoplasm</location>
    </subcellularLocation>
</comment>
<comment type="similarity">
    <text evidence="1">Belongs to the RbfA family.</text>
</comment>
<comment type="sequence caution" evidence="2">
    <conflict type="erroneous initiation">
        <sequence resource="EMBL-CDS" id="AAM84277"/>
    </conflict>
    <text>Extended N-terminus.</text>
</comment>
<comment type="sequence caution" evidence="2">
    <conflict type="erroneous initiation">
        <sequence resource="EMBL-CDS" id="AAS60858"/>
    </conflict>
    <text>Extended N-terminus.</text>
</comment>
<name>RBFA_YERPE</name>
<feature type="chain" id="PRO_0000102778" description="Ribosome-binding factor A">
    <location>
        <begin position="1"/>
        <end position="136"/>
    </location>
</feature>
<dbReference type="EMBL" id="AL590842">
    <property type="protein sequence ID" value="CAL22083.1"/>
    <property type="molecule type" value="Genomic_DNA"/>
</dbReference>
<dbReference type="EMBL" id="AE009952">
    <property type="protein sequence ID" value="AAM84277.1"/>
    <property type="status" value="ALT_INIT"/>
    <property type="molecule type" value="Genomic_DNA"/>
</dbReference>
<dbReference type="EMBL" id="AE017042">
    <property type="protein sequence ID" value="AAS60858.1"/>
    <property type="status" value="ALT_INIT"/>
    <property type="molecule type" value="Genomic_DNA"/>
</dbReference>
<dbReference type="PIR" id="AH0424">
    <property type="entry name" value="AH0424"/>
</dbReference>
<dbReference type="RefSeq" id="WP_002209255.1">
    <property type="nucleotide sequence ID" value="NZ_WUCM01000036.1"/>
</dbReference>
<dbReference type="RefSeq" id="YP_002348384.1">
    <property type="nucleotide sequence ID" value="NC_003143.1"/>
</dbReference>
<dbReference type="SMR" id="Q8ZBC3"/>
<dbReference type="STRING" id="214092.YPO3495"/>
<dbReference type="PaxDb" id="214092-YPO3495"/>
<dbReference type="EnsemblBacteria" id="AAS60858">
    <property type="protein sequence ID" value="AAS60858"/>
    <property type="gene ID" value="YP_0588"/>
</dbReference>
<dbReference type="GeneID" id="96663988"/>
<dbReference type="KEGG" id="ype:YPO3495"/>
<dbReference type="KEGG" id="ypk:y0689"/>
<dbReference type="KEGG" id="ypm:YP_0588"/>
<dbReference type="PATRIC" id="fig|214092.21.peg.3989"/>
<dbReference type="eggNOG" id="COG0858">
    <property type="taxonomic scope" value="Bacteria"/>
</dbReference>
<dbReference type="HOGENOM" id="CLU_089475_5_0_6"/>
<dbReference type="OMA" id="QHAKIFV"/>
<dbReference type="OrthoDB" id="307788at2"/>
<dbReference type="Proteomes" id="UP000000815">
    <property type="component" value="Chromosome"/>
</dbReference>
<dbReference type="Proteomes" id="UP000001019">
    <property type="component" value="Chromosome"/>
</dbReference>
<dbReference type="Proteomes" id="UP000002490">
    <property type="component" value="Chromosome"/>
</dbReference>
<dbReference type="GO" id="GO:0005829">
    <property type="term" value="C:cytosol"/>
    <property type="evidence" value="ECO:0000318"/>
    <property type="project" value="GO_Central"/>
</dbReference>
<dbReference type="GO" id="GO:0043024">
    <property type="term" value="F:ribosomal small subunit binding"/>
    <property type="evidence" value="ECO:0000318"/>
    <property type="project" value="GO_Central"/>
</dbReference>
<dbReference type="GO" id="GO:0030490">
    <property type="term" value="P:maturation of SSU-rRNA"/>
    <property type="evidence" value="ECO:0007669"/>
    <property type="project" value="UniProtKB-UniRule"/>
</dbReference>
<dbReference type="GO" id="GO:0042254">
    <property type="term" value="P:ribosome biogenesis"/>
    <property type="evidence" value="ECO:0000318"/>
    <property type="project" value="GO_Central"/>
</dbReference>
<dbReference type="FunFam" id="3.30.300.20:FF:000007">
    <property type="entry name" value="Ribosome-binding factor A"/>
    <property type="match status" value="1"/>
</dbReference>
<dbReference type="Gene3D" id="3.30.300.20">
    <property type="match status" value="1"/>
</dbReference>
<dbReference type="HAMAP" id="MF_00003">
    <property type="entry name" value="RbfA"/>
    <property type="match status" value="1"/>
</dbReference>
<dbReference type="InterPro" id="IPR015946">
    <property type="entry name" value="KH_dom-like_a/b"/>
</dbReference>
<dbReference type="InterPro" id="IPR000238">
    <property type="entry name" value="RbfA"/>
</dbReference>
<dbReference type="InterPro" id="IPR023799">
    <property type="entry name" value="RbfA_dom_sf"/>
</dbReference>
<dbReference type="InterPro" id="IPR020053">
    <property type="entry name" value="Ribosome-bd_factorA_CS"/>
</dbReference>
<dbReference type="NCBIfam" id="TIGR00082">
    <property type="entry name" value="rbfA"/>
    <property type="match status" value="1"/>
</dbReference>
<dbReference type="PANTHER" id="PTHR33515">
    <property type="entry name" value="RIBOSOME-BINDING FACTOR A, CHLOROPLASTIC-RELATED"/>
    <property type="match status" value="1"/>
</dbReference>
<dbReference type="PANTHER" id="PTHR33515:SF1">
    <property type="entry name" value="RIBOSOME-BINDING FACTOR A, CHLOROPLASTIC-RELATED"/>
    <property type="match status" value="1"/>
</dbReference>
<dbReference type="Pfam" id="PF02033">
    <property type="entry name" value="RBFA"/>
    <property type="match status" value="1"/>
</dbReference>
<dbReference type="SUPFAM" id="SSF89919">
    <property type="entry name" value="Ribosome-binding factor A, RbfA"/>
    <property type="match status" value="1"/>
</dbReference>
<dbReference type="PROSITE" id="PS01319">
    <property type="entry name" value="RBFA"/>
    <property type="match status" value="1"/>
</dbReference>
<organism>
    <name type="scientific">Yersinia pestis</name>
    <dbReference type="NCBI Taxonomy" id="632"/>
    <lineage>
        <taxon>Bacteria</taxon>
        <taxon>Pseudomonadati</taxon>
        <taxon>Pseudomonadota</taxon>
        <taxon>Gammaproteobacteria</taxon>
        <taxon>Enterobacterales</taxon>
        <taxon>Yersiniaceae</taxon>
        <taxon>Yersinia</taxon>
    </lineage>
</organism>
<sequence length="136" mass="15263">MAKEFSRSQRVSQEMQKEIALILQREIKDPRVGMATVSGIELSRDLAYAKVFVTFLNVLTDNADPDTVKNGIKALQDASGYIRTLLGKAMRLRIVPELTFAYDNSLIEGMRMSNLVSNVIKNDVERQVNPGSDEEK</sequence>
<evidence type="ECO:0000255" key="1">
    <source>
        <dbReference type="HAMAP-Rule" id="MF_00003"/>
    </source>
</evidence>
<evidence type="ECO:0000305" key="2"/>
<gene>
    <name evidence="1" type="primary">rbfA</name>
    <name type="ordered locus">YPO3495</name>
    <name type="ordered locus">y0689</name>
    <name type="ordered locus">YP_0588</name>
</gene>